<name>DCD_ECOLU</name>
<comment type="function">
    <text evidence="1">Catalyzes the deamination of dCTP to dUTP.</text>
</comment>
<comment type="catalytic activity">
    <reaction evidence="1">
        <text>dCTP + H2O + H(+) = dUTP + NH4(+)</text>
        <dbReference type="Rhea" id="RHEA:22680"/>
        <dbReference type="ChEBI" id="CHEBI:15377"/>
        <dbReference type="ChEBI" id="CHEBI:15378"/>
        <dbReference type="ChEBI" id="CHEBI:28938"/>
        <dbReference type="ChEBI" id="CHEBI:61481"/>
        <dbReference type="ChEBI" id="CHEBI:61555"/>
        <dbReference type="EC" id="3.5.4.13"/>
    </reaction>
</comment>
<comment type="pathway">
    <text evidence="1">Pyrimidine metabolism; dUMP biosynthesis; dUMP from dCTP (dUTP route): step 1/2.</text>
</comment>
<comment type="subunit">
    <text evidence="1">Homotrimer.</text>
</comment>
<comment type="similarity">
    <text evidence="1">Belongs to the dCTP deaminase family.</text>
</comment>
<sequence>MRLCDRDIEAWLDEGRLSINPRPPVERINGATVDVRLGNKFRTFRGHTAAFIDLSGPKDEVSAALDRVMSDEIVLDESEAFYLHPGELALAVTLESVTLPADLVGWLDGRSSLARLGLMVHVTAHRIDPGWSGCIVLEFYNSGKLPLALRPGMLIGALSFEPLSGPAARPYNRREDAKYRNQQGAVASRIDKD</sequence>
<dbReference type="EC" id="3.5.4.13" evidence="1"/>
<dbReference type="EMBL" id="CU928163">
    <property type="protein sequence ID" value="CAR13591.1"/>
    <property type="molecule type" value="Genomic_DNA"/>
</dbReference>
<dbReference type="RefSeq" id="WP_001234777.1">
    <property type="nucleotide sequence ID" value="NC_011751.1"/>
</dbReference>
<dbReference type="RefSeq" id="YP_002413119.1">
    <property type="nucleotide sequence ID" value="NC_011751.1"/>
</dbReference>
<dbReference type="SMR" id="B7NCA1"/>
<dbReference type="STRING" id="585056.ECUMN_2403"/>
<dbReference type="KEGG" id="eum:ECUMN_2403"/>
<dbReference type="PATRIC" id="fig|585056.7.peg.2584"/>
<dbReference type="HOGENOM" id="CLU_087476_2_0_6"/>
<dbReference type="UniPathway" id="UPA00610">
    <property type="reaction ID" value="UER00665"/>
</dbReference>
<dbReference type="Proteomes" id="UP000007097">
    <property type="component" value="Chromosome"/>
</dbReference>
<dbReference type="GO" id="GO:0008829">
    <property type="term" value="F:dCTP deaminase activity"/>
    <property type="evidence" value="ECO:0007669"/>
    <property type="project" value="UniProtKB-UniRule"/>
</dbReference>
<dbReference type="GO" id="GO:0000166">
    <property type="term" value="F:nucleotide binding"/>
    <property type="evidence" value="ECO:0007669"/>
    <property type="project" value="UniProtKB-KW"/>
</dbReference>
<dbReference type="GO" id="GO:0006226">
    <property type="term" value="P:dUMP biosynthetic process"/>
    <property type="evidence" value="ECO:0007669"/>
    <property type="project" value="UniProtKB-UniPathway"/>
</dbReference>
<dbReference type="GO" id="GO:0006229">
    <property type="term" value="P:dUTP biosynthetic process"/>
    <property type="evidence" value="ECO:0007669"/>
    <property type="project" value="UniProtKB-UniRule"/>
</dbReference>
<dbReference type="GO" id="GO:0015949">
    <property type="term" value="P:nucleobase-containing small molecule interconversion"/>
    <property type="evidence" value="ECO:0007669"/>
    <property type="project" value="TreeGrafter"/>
</dbReference>
<dbReference type="CDD" id="cd07557">
    <property type="entry name" value="trimeric_dUTPase"/>
    <property type="match status" value="1"/>
</dbReference>
<dbReference type="FunFam" id="2.70.40.10:FF:000003">
    <property type="entry name" value="dCTP deaminase"/>
    <property type="match status" value="1"/>
</dbReference>
<dbReference type="Gene3D" id="2.70.40.10">
    <property type="match status" value="1"/>
</dbReference>
<dbReference type="HAMAP" id="MF_00146">
    <property type="entry name" value="dCTP_deaminase"/>
    <property type="match status" value="1"/>
</dbReference>
<dbReference type="InterPro" id="IPR011962">
    <property type="entry name" value="dCTP_deaminase"/>
</dbReference>
<dbReference type="InterPro" id="IPR036157">
    <property type="entry name" value="dUTPase-like_sf"/>
</dbReference>
<dbReference type="InterPro" id="IPR033704">
    <property type="entry name" value="dUTPase_trimeric"/>
</dbReference>
<dbReference type="NCBIfam" id="TIGR02274">
    <property type="entry name" value="dCTP_deam"/>
    <property type="match status" value="1"/>
</dbReference>
<dbReference type="PANTHER" id="PTHR42680">
    <property type="entry name" value="DCTP DEAMINASE"/>
    <property type="match status" value="1"/>
</dbReference>
<dbReference type="PANTHER" id="PTHR42680:SF3">
    <property type="entry name" value="DCTP DEAMINASE"/>
    <property type="match status" value="1"/>
</dbReference>
<dbReference type="Pfam" id="PF22769">
    <property type="entry name" value="DCD"/>
    <property type="match status" value="1"/>
</dbReference>
<dbReference type="SUPFAM" id="SSF51283">
    <property type="entry name" value="dUTPase-like"/>
    <property type="match status" value="1"/>
</dbReference>
<gene>
    <name evidence="1" type="primary">dcd</name>
    <name type="ordered locus">ECUMN_2403</name>
</gene>
<proteinExistence type="inferred from homology"/>
<reference key="1">
    <citation type="journal article" date="2009" name="PLoS Genet.">
        <title>Organised genome dynamics in the Escherichia coli species results in highly diverse adaptive paths.</title>
        <authorList>
            <person name="Touchon M."/>
            <person name="Hoede C."/>
            <person name="Tenaillon O."/>
            <person name="Barbe V."/>
            <person name="Baeriswyl S."/>
            <person name="Bidet P."/>
            <person name="Bingen E."/>
            <person name="Bonacorsi S."/>
            <person name="Bouchier C."/>
            <person name="Bouvet O."/>
            <person name="Calteau A."/>
            <person name="Chiapello H."/>
            <person name="Clermont O."/>
            <person name="Cruveiller S."/>
            <person name="Danchin A."/>
            <person name="Diard M."/>
            <person name="Dossat C."/>
            <person name="Karoui M.E."/>
            <person name="Frapy E."/>
            <person name="Garry L."/>
            <person name="Ghigo J.M."/>
            <person name="Gilles A.M."/>
            <person name="Johnson J."/>
            <person name="Le Bouguenec C."/>
            <person name="Lescat M."/>
            <person name="Mangenot S."/>
            <person name="Martinez-Jehanne V."/>
            <person name="Matic I."/>
            <person name="Nassif X."/>
            <person name="Oztas S."/>
            <person name="Petit M.A."/>
            <person name="Pichon C."/>
            <person name="Rouy Z."/>
            <person name="Ruf C.S."/>
            <person name="Schneider D."/>
            <person name="Tourret J."/>
            <person name="Vacherie B."/>
            <person name="Vallenet D."/>
            <person name="Medigue C."/>
            <person name="Rocha E.P.C."/>
            <person name="Denamur E."/>
        </authorList>
    </citation>
    <scope>NUCLEOTIDE SEQUENCE [LARGE SCALE GENOMIC DNA]</scope>
    <source>
        <strain>UMN026 / ExPEC</strain>
    </source>
</reference>
<evidence type="ECO:0000255" key="1">
    <source>
        <dbReference type="HAMAP-Rule" id="MF_00146"/>
    </source>
</evidence>
<evidence type="ECO:0000256" key="2">
    <source>
        <dbReference type="SAM" id="MobiDB-lite"/>
    </source>
</evidence>
<accession>B7NCA1</accession>
<protein>
    <recommendedName>
        <fullName evidence="1">dCTP deaminase</fullName>
        <ecNumber evidence="1">3.5.4.13</ecNumber>
    </recommendedName>
    <alternativeName>
        <fullName evidence="1">Deoxycytidine triphosphate deaminase</fullName>
    </alternativeName>
</protein>
<organism>
    <name type="scientific">Escherichia coli O17:K52:H18 (strain UMN026 / ExPEC)</name>
    <dbReference type="NCBI Taxonomy" id="585056"/>
    <lineage>
        <taxon>Bacteria</taxon>
        <taxon>Pseudomonadati</taxon>
        <taxon>Pseudomonadota</taxon>
        <taxon>Gammaproteobacteria</taxon>
        <taxon>Enterobacterales</taxon>
        <taxon>Enterobacteriaceae</taxon>
        <taxon>Escherichia</taxon>
    </lineage>
</organism>
<feature type="chain" id="PRO_1000117972" description="dCTP deaminase">
    <location>
        <begin position="1"/>
        <end position="193"/>
    </location>
</feature>
<feature type="region of interest" description="Disordered" evidence="2">
    <location>
        <begin position="169"/>
        <end position="193"/>
    </location>
</feature>
<feature type="active site" description="Proton donor/acceptor" evidence="1">
    <location>
        <position position="138"/>
    </location>
</feature>
<feature type="binding site" evidence="1">
    <location>
        <begin position="110"/>
        <end position="115"/>
    </location>
    <ligand>
        <name>dCTP</name>
        <dbReference type="ChEBI" id="CHEBI:61481"/>
    </ligand>
</feature>
<feature type="binding site" evidence="1">
    <location>
        <position position="128"/>
    </location>
    <ligand>
        <name>dCTP</name>
        <dbReference type="ChEBI" id="CHEBI:61481"/>
    </ligand>
</feature>
<feature type="binding site" evidence="1">
    <location>
        <begin position="136"/>
        <end position="138"/>
    </location>
    <ligand>
        <name>dCTP</name>
        <dbReference type="ChEBI" id="CHEBI:61481"/>
    </ligand>
</feature>
<feature type="binding site" evidence="1">
    <location>
        <position position="171"/>
    </location>
    <ligand>
        <name>dCTP</name>
        <dbReference type="ChEBI" id="CHEBI:61481"/>
    </ligand>
</feature>
<feature type="binding site" evidence="1">
    <location>
        <position position="178"/>
    </location>
    <ligand>
        <name>dCTP</name>
        <dbReference type="ChEBI" id="CHEBI:61481"/>
    </ligand>
</feature>
<feature type="binding site" evidence="1">
    <location>
        <position position="182"/>
    </location>
    <ligand>
        <name>dCTP</name>
        <dbReference type="ChEBI" id="CHEBI:61481"/>
    </ligand>
</feature>
<keyword id="KW-0378">Hydrolase</keyword>
<keyword id="KW-0546">Nucleotide metabolism</keyword>
<keyword id="KW-0547">Nucleotide-binding</keyword>